<dbReference type="EC" id="2.1.1.45" evidence="1"/>
<dbReference type="EMBL" id="CP000627">
    <property type="protein sequence ID" value="ABQ19934.1"/>
    <property type="molecule type" value="Genomic_DNA"/>
</dbReference>
<dbReference type="EMBL" id="CP001235">
    <property type="protein sequence ID" value="ACP08710.1"/>
    <property type="molecule type" value="Genomic_DNA"/>
</dbReference>
<dbReference type="RefSeq" id="WP_000816213.1">
    <property type="nucleotide sequence ID" value="NZ_JAACZH010000006.1"/>
</dbReference>
<dbReference type="SMR" id="A5F8Y6"/>
<dbReference type="KEGG" id="vco:VC0395_A0207"/>
<dbReference type="KEGG" id="vcr:VC395_0692"/>
<dbReference type="PATRIC" id="fig|345073.21.peg.674"/>
<dbReference type="eggNOG" id="COG0207">
    <property type="taxonomic scope" value="Bacteria"/>
</dbReference>
<dbReference type="HOGENOM" id="CLU_021669_0_1_6"/>
<dbReference type="OrthoDB" id="9774633at2"/>
<dbReference type="UniPathway" id="UPA00575"/>
<dbReference type="Proteomes" id="UP000000249">
    <property type="component" value="Chromosome 2"/>
</dbReference>
<dbReference type="GO" id="GO:0005829">
    <property type="term" value="C:cytosol"/>
    <property type="evidence" value="ECO:0007669"/>
    <property type="project" value="TreeGrafter"/>
</dbReference>
<dbReference type="GO" id="GO:0004799">
    <property type="term" value="F:thymidylate synthase activity"/>
    <property type="evidence" value="ECO:0007669"/>
    <property type="project" value="UniProtKB-UniRule"/>
</dbReference>
<dbReference type="GO" id="GO:0006231">
    <property type="term" value="P:dTMP biosynthetic process"/>
    <property type="evidence" value="ECO:0007669"/>
    <property type="project" value="UniProtKB-UniRule"/>
</dbReference>
<dbReference type="GO" id="GO:0006235">
    <property type="term" value="P:dTTP biosynthetic process"/>
    <property type="evidence" value="ECO:0007669"/>
    <property type="project" value="UniProtKB-UniRule"/>
</dbReference>
<dbReference type="GO" id="GO:0032259">
    <property type="term" value="P:methylation"/>
    <property type="evidence" value="ECO:0007669"/>
    <property type="project" value="UniProtKB-KW"/>
</dbReference>
<dbReference type="CDD" id="cd00351">
    <property type="entry name" value="TS_Pyrimidine_HMase"/>
    <property type="match status" value="1"/>
</dbReference>
<dbReference type="FunFam" id="3.30.572.10:FF:000003">
    <property type="entry name" value="Thymidylate synthase"/>
    <property type="match status" value="1"/>
</dbReference>
<dbReference type="Gene3D" id="3.30.572.10">
    <property type="entry name" value="Thymidylate synthase/dCMP hydroxymethylase domain"/>
    <property type="match status" value="1"/>
</dbReference>
<dbReference type="HAMAP" id="MF_00008">
    <property type="entry name" value="Thymidy_synth_bact"/>
    <property type="match status" value="1"/>
</dbReference>
<dbReference type="InterPro" id="IPR045097">
    <property type="entry name" value="Thymidate_synth/dCMP_Mease"/>
</dbReference>
<dbReference type="InterPro" id="IPR023451">
    <property type="entry name" value="Thymidate_synth/dCMP_Mease_dom"/>
</dbReference>
<dbReference type="InterPro" id="IPR036926">
    <property type="entry name" value="Thymidate_synth/dCMP_Mease_sf"/>
</dbReference>
<dbReference type="InterPro" id="IPR000398">
    <property type="entry name" value="Thymidylate_synthase"/>
</dbReference>
<dbReference type="InterPro" id="IPR020940">
    <property type="entry name" value="Thymidylate_synthase_AS"/>
</dbReference>
<dbReference type="NCBIfam" id="NF002498">
    <property type="entry name" value="PRK01827.1-4"/>
    <property type="match status" value="1"/>
</dbReference>
<dbReference type="NCBIfam" id="TIGR03284">
    <property type="entry name" value="thym_sym"/>
    <property type="match status" value="1"/>
</dbReference>
<dbReference type="PANTHER" id="PTHR11548:SF9">
    <property type="entry name" value="THYMIDYLATE SYNTHASE"/>
    <property type="match status" value="1"/>
</dbReference>
<dbReference type="PANTHER" id="PTHR11548">
    <property type="entry name" value="THYMIDYLATE SYNTHASE 1"/>
    <property type="match status" value="1"/>
</dbReference>
<dbReference type="Pfam" id="PF00303">
    <property type="entry name" value="Thymidylat_synt"/>
    <property type="match status" value="1"/>
</dbReference>
<dbReference type="PRINTS" id="PR00108">
    <property type="entry name" value="THYMDSNTHASE"/>
</dbReference>
<dbReference type="SUPFAM" id="SSF55831">
    <property type="entry name" value="Thymidylate synthase/dCMP hydroxymethylase"/>
    <property type="match status" value="1"/>
</dbReference>
<dbReference type="PROSITE" id="PS00091">
    <property type="entry name" value="THYMIDYLATE_SYNTHASE"/>
    <property type="match status" value="1"/>
</dbReference>
<sequence>MKQYLDLCQRIVDQGVWVENERTGKRCLTVINADLTYDVGNNQFPLVTTRKSFWKAAVAELLGYIRGYDNAADFRQLGTKTWDANANLNQAWLNNPYRKGEDDMGRVYGVQGRAWAKPDGGHIDQLKKIVDDLSRGVDDRGEILNFYNPGEFHMGCLRPCMYSHHFSLLGDTLYLNSTQRSCDVPLGLNFNMVQVYVFLALMAQITGKKPGLAYHKIVNAHIYQDQLELMRDVQLKREPFPAPQFHINPKIKTLQDLETWVTLDDFDVTGYQFHDPIQYPFSV</sequence>
<feature type="chain" id="PRO_1000070928" description="Thymidylate synthase">
    <location>
        <begin position="1"/>
        <end position="283"/>
    </location>
</feature>
<feature type="active site" description="Nucleophile" evidence="1">
    <location>
        <position position="160"/>
    </location>
</feature>
<feature type="binding site" evidence="1">
    <location>
        <position position="22"/>
    </location>
    <ligand>
        <name>dUMP</name>
        <dbReference type="ChEBI" id="CHEBI:246422"/>
    </ligand>
</feature>
<feature type="binding site" evidence="1">
    <location>
        <begin position="180"/>
        <end position="183"/>
    </location>
    <ligand>
        <name>dUMP</name>
        <dbReference type="ChEBI" id="CHEBI:246422"/>
    </ligand>
</feature>
<feature type="binding site" evidence="1">
    <location>
        <position position="183"/>
    </location>
    <ligand>
        <name>(6R)-5,10-methylene-5,6,7,8-tetrahydrofolate</name>
        <dbReference type="ChEBI" id="CHEBI:15636"/>
    </ligand>
</feature>
<feature type="binding site" evidence="1">
    <location>
        <position position="191"/>
    </location>
    <ligand>
        <name>dUMP</name>
        <dbReference type="ChEBI" id="CHEBI:246422"/>
    </ligand>
</feature>
<feature type="binding site" evidence="1">
    <location>
        <begin position="221"/>
        <end position="223"/>
    </location>
    <ligand>
        <name>dUMP</name>
        <dbReference type="ChEBI" id="CHEBI:246422"/>
    </ligand>
</feature>
<feature type="binding site" evidence="1">
    <location>
        <position position="282"/>
    </location>
    <ligand>
        <name>(6R)-5,10-methylene-5,6,7,8-tetrahydrofolate</name>
        <dbReference type="ChEBI" id="CHEBI:15636"/>
    </ligand>
</feature>
<comment type="function">
    <text evidence="1">Catalyzes the reductive methylation of 2'-deoxyuridine-5'-monophosphate (dUMP) to 2'-deoxythymidine-5'-monophosphate (dTMP) while utilizing 5,10-methylenetetrahydrofolate (mTHF) as the methyl donor and reductant in the reaction, yielding dihydrofolate (DHF) as a by-product. This enzymatic reaction provides an intracellular de novo source of dTMP, an essential precursor for DNA biosynthesis.</text>
</comment>
<comment type="catalytic activity">
    <reaction evidence="1">
        <text>dUMP + (6R)-5,10-methylene-5,6,7,8-tetrahydrofolate = 7,8-dihydrofolate + dTMP</text>
        <dbReference type="Rhea" id="RHEA:12104"/>
        <dbReference type="ChEBI" id="CHEBI:15636"/>
        <dbReference type="ChEBI" id="CHEBI:57451"/>
        <dbReference type="ChEBI" id="CHEBI:63528"/>
        <dbReference type="ChEBI" id="CHEBI:246422"/>
        <dbReference type="EC" id="2.1.1.45"/>
    </reaction>
</comment>
<comment type="pathway">
    <text evidence="1">Pyrimidine metabolism; dTTP biosynthesis.</text>
</comment>
<comment type="subunit">
    <text evidence="1">Homodimer.</text>
</comment>
<comment type="subcellular location">
    <subcellularLocation>
        <location evidence="1">Cytoplasm</location>
    </subcellularLocation>
</comment>
<comment type="similarity">
    <text evidence="1">Belongs to the thymidylate synthase family. Bacterial-type ThyA subfamily.</text>
</comment>
<organism>
    <name type="scientific">Vibrio cholerae serotype O1 (strain ATCC 39541 / Classical Ogawa 395 / O395)</name>
    <dbReference type="NCBI Taxonomy" id="345073"/>
    <lineage>
        <taxon>Bacteria</taxon>
        <taxon>Pseudomonadati</taxon>
        <taxon>Pseudomonadota</taxon>
        <taxon>Gammaproteobacteria</taxon>
        <taxon>Vibrionales</taxon>
        <taxon>Vibrionaceae</taxon>
        <taxon>Vibrio</taxon>
    </lineage>
</organism>
<accession>A5F8Y6</accession>
<accession>C3LXY6</accession>
<proteinExistence type="inferred from homology"/>
<reference key="1">
    <citation type="submission" date="2007-03" db="EMBL/GenBank/DDBJ databases">
        <authorList>
            <person name="Heidelberg J."/>
        </authorList>
    </citation>
    <scope>NUCLEOTIDE SEQUENCE [LARGE SCALE GENOMIC DNA]</scope>
    <source>
        <strain>ATCC 39541 / Classical Ogawa 395 / O395</strain>
    </source>
</reference>
<reference key="2">
    <citation type="journal article" date="2008" name="PLoS ONE">
        <title>A recalibrated molecular clock and independent origins for the cholera pandemic clones.</title>
        <authorList>
            <person name="Feng L."/>
            <person name="Reeves P.R."/>
            <person name="Lan R."/>
            <person name="Ren Y."/>
            <person name="Gao C."/>
            <person name="Zhou Z."/>
            <person name="Ren Y."/>
            <person name="Cheng J."/>
            <person name="Wang W."/>
            <person name="Wang J."/>
            <person name="Qian W."/>
            <person name="Li D."/>
            <person name="Wang L."/>
        </authorList>
    </citation>
    <scope>NUCLEOTIDE SEQUENCE [LARGE SCALE GENOMIC DNA]</scope>
    <source>
        <strain>ATCC 39541 / Classical Ogawa 395 / O395</strain>
    </source>
</reference>
<gene>
    <name evidence="1" type="primary">thyA</name>
    <name type="ordered locus">VC0395_A0207</name>
    <name type="ordered locus">VC395_0692</name>
</gene>
<keyword id="KW-0963">Cytoplasm</keyword>
<keyword id="KW-0489">Methyltransferase</keyword>
<keyword id="KW-0545">Nucleotide biosynthesis</keyword>
<keyword id="KW-0808">Transferase</keyword>
<protein>
    <recommendedName>
        <fullName evidence="1">Thymidylate synthase</fullName>
        <shortName evidence="1">TS</shortName>
        <shortName evidence="1">TSase</shortName>
        <ecNumber evidence="1">2.1.1.45</ecNumber>
    </recommendedName>
</protein>
<name>TYSY_VIBC3</name>
<evidence type="ECO:0000255" key="1">
    <source>
        <dbReference type="HAMAP-Rule" id="MF_00008"/>
    </source>
</evidence>